<name>CAPSD_MDV9</name>
<comment type="subcellular location">
    <subcellularLocation>
        <location evidence="2">Virion</location>
    </subcellularLocation>
</comment>
<comment type="similarity">
    <text evidence="2">Belongs to the nanoviridae capsid protein family.</text>
</comment>
<organism>
    <name type="scientific">Milk vetch dwarf virus (isolate 9)</name>
    <name type="common">MDV</name>
    <dbReference type="NCBI Taxonomy" id="291606"/>
    <lineage>
        <taxon>Viruses</taxon>
        <taxon>Monodnaviria</taxon>
        <taxon>Shotokuvirae</taxon>
        <taxon>Cressdnaviricota</taxon>
        <taxon>Arfiviricetes</taxon>
        <taxon>Mulpavirales</taxon>
        <taxon>Nanoviridae</taxon>
        <taxon>Nanovirus</taxon>
        <taxon>Milk vetch dwarf virus</taxon>
    </lineage>
</organism>
<reference key="1">
    <citation type="submission" date="2000-06" db="EMBL/GenBank/DDBJ databases">
        <title>Etiology of outbreaks of yellow dwarf on broad bean in Kagoshima prefecture: identification and analyses of genomic.</title>
        <authorList>
            <person name="Sano Y."/>
            <person name="Ogawa N."/>
            <person name="Nojima H."/>
            <person name="Hashimoto Y."/>
            <person name="Matsumoto T."/>
            <person name="Arai K."/>
        </authorList>
    </citation>
    <scope>NUCLEOTIDE SEQUENCE [GENOMIC DNA]</scope>
</reference>
<sequence>MVSNWNRNGMKRRRTPRRGYGRPYKPVVPITRVVVHQSALLKKDEVVGCEIKPDGDVARYKMRKVMLTCTLRMPPGELVNYIIVKSSSPIANWAAAFTAPALLVKESCQDMISIIAKGKVESNGVAGTDCTKSFNKFIRLGAGISQTQHLYVVMYTSVALKVVLEHRVYIEL</sequence>
<keyword id="KW-0167">Capsid protein</keyword>
<keyword id="KW-1140">T=1 icosahedral capsid protein</keyword>
<keyword id="KW-0946">Virion</keyword>
<evidence type="ECO:0000256" key="1">
    <source>
        <dbReference type="SAM" id="MobiDB-lite"/>
    </source>
</evidence>
<evidence type="ECO:0000305" key="2"/>
<feature type="chain" id="PRO_0000222436" description="Capsid protein">
    <location>
        <begin position="1"/>
        <end position="172"/>
    </location>
</feature>
<feature type="region of interest" description="Disordered" evidence="1">
    <location>
        <begin position="1"/>
        <end position="23"/>
    </location>
</feature>
<feature type="compositionally biased region" description="Basic residues" evidence="1">
    <location>
        <begin position="9"/>
        <end position="20"/>
    </location>
</feature>
<dbReference type="EMBL" id="AB044387">
    <property type="protein sequence ID" value="BAB78734.1"/>
    <property type="molecule type" value="Genomic_DNA"/>
</dbReference>
<dbReference type="SMR" id="Q8V987"/>
<dbReference type="GO" id="GO:0039615">
    <property type="term" value="C:T=1 icosahedral viral capsid"/>
    <property type="evidence" value="ECO:0007669"/>
    <property type="project" value="UniProtKB-KW"/>
</dbReference>
<dbReference type="InterPro" id="IPR006753">
    <property type="entry name" value="Nanovirus_coat"/>
</dbReference>
<dbReference type="Pfam" id="PF04660">
    <property type="entry name" value="Nanovirus_coat"/>
    <property type="match status" value="1"/>
</dbReference>
<accession>Q8V987</accession>
<gene>
    <name type="primary">DNA-S</name>
    <name type="synonym">C9</name>
</gene>
<proteinExistence type="inferred from homology"/>
<protein>
    <recommendedName>
        <fullName>Capsid protein</fullName>
        <shortName>CP</shortName>
    </recommendedName>
    <alternativeName>
        <fullName>Coat protein</fullName>
    </alternativeName>
</protein>
<organismHost>
    <name type="scientific">Astragalus sinicus</name>
    <name type="common">Chinese milk vetch</name>
    <dbReference type="NCBI Taxonomy" id="47065"/>
</organismHost>
<organismHost>
    <name type="scientific">Glycine max</name>
    <name type="common">Soybean</name>
    <name type="synonym">Glycine hispida</name>
    <dbReference type="NCBI Taxonomy" id="3847"/>
</organismHost>
<organismHost>
    <name type="scientific">Phaseolus vulgaris</name>
    <name type="common">Kidney bean</name>
    <name type="synonym">French bean</name>
    <dbReference type="NCBI Taxonomy" id="3885"/>
</organismHost>
<organismHost>
    <name type="scientific">Pisum sativum</name>
    <name type="common">Garden pea</name>
    <name type="synonym">Lathyrus oleraceus</name>
    <dbReference type="NCBI Taxonomy" id="3888"/>
</organismHost>
<organismHost>
    <name type="scientific">Vicia faba</name>
    <name type="common">Broad bean</name>
    <name type="synonym">Faba vulgaris</name>
    <dbReference type="NCBI Taxonomy" id="3906"/>
</organismHost>